<accession>O13522</accession>
<gene>
    <name type="ordered locus">YDR396W</name>
</gene>
<organism>
    <name type="scientific">Saccharomyces cerevisiae (strain ATCC 204508 / S288c)</name>
    <name type="common">Baker's yeast</name>
    <dbReference type="NCBI Taxonomy" id="559292"/>
    <lineage>
        <taxon>Eukaryota</taxon>
        <taxon>Fungi</taxon>
        <taxon>Dikarya</taxon>
        <taxon>Ascomycota</taxon>
        <taxon>Saccharomycotina</taxon>
        <taxon>Saccharomycetes</taxon>
        <taxon>Saccharomycetales</taxon>
        <taxon>Saccharomycetaceae</taxon>
        <taxon>Saccharomyces</taxon>
    </lineage>
</organism>
<dbReference type="EMBL" id="U32274">
    <property type="protein sequence ID" value="AAB64850.1"/>
    <property type="molecule type" value="Genomic_DNA"/>
</dbReference>
<dbReference type="PIR" id="S69692">
    <property type="entry name" value="S69692"/>
</dbReference>
<dbReference type="MINT" id="O13522"/>
<dbReference type="STRING" id="4932.YDR396W"/>
<dbReference type="PaxDb" id="4932-YDR396W"/>
<dbReference type="EnsemblFungi" id="YDR396W_mRNA">
    <property type="protein sequence ID" value="YDR396W"/>
    <property type="gene ID" value="YDR396W"/>
</dbReference>
<dbReference type="AGR" id="SGD:S000002804"/>
<dbReference type="SGD" id="S000002804">
    <property type="gene designation" value="YDR396W"/>
</dbReference>
<dbReference type="HOGENOM" id="CLU_1604035_0_0_1"/>
<dbReference type="GO" id="GO:0016020">
    <property type="term" value="C:membrane"/>
    <property type="evidence" value="ECO:0007669"/>
    <property type="project" value="UniProtKB-SubCell"/>
</dbReference>
<proteinExistence type="uncertain"/>
<comment type="subcellular location">
    <subcellularLocation>
        <location evidence="2">Membrane</location>
        <topology evidence="2">Multi-pass membrane protein</topology>
    </subcellularLocation>
</comment>
<comment type="miscellaneous">
    <text evidence="2">Partially overlaps NCB2.</text>
</comment>
<comment type="caution">
    <text evidence="3">Product of a dubious gene prediction unlikely to encode a functional protein. Because of that it is not part of the S.cerevisiae S288c complete/reference proteome set.</text>
</comment>
<name>YD396_YEAST</name>
<keyword id="KW-0472">Membrane</keyword>
<keyword id="KW-0812">Transmembrane</keyword>
<keyword id="KW-1133">Transmembrane helix</keyword>
<reference key="1">
    <citation type="journal article" date="1997" name="Nature">
        <title>The nucleotide sequence of Saccharomyces cerevisiae chromosome IV.</title>
        <authorList>
            <person name="Jacq C."/>
            <person name="Alt-Moerbe J."/>
            <person name="Andre B."/>
            <person name="Arnold W."/>
            <person name="Bahr A."/>
            <person name="Ballesta J.P.G."/>
            <person name="Bargues M."/>
            <person name="Baron L."/>
            <person name="Becker A."/>
            <person name="Biteau N."/>
            <person name="Bloecker H."/>
            <person name="Blugeon C."/>
            <person name="Boskovic J."/>
            <person name="Brandt P."/>
            <person name="Brueckner M."/>
            <person name="Buitrago M.J."/>
            <person name="Coster F."/>
            <person name="Delaveau T."/>
            <person name="del Rey F."/>
            <person name="Dujon B."/>
            <person name="Eide L.G."/>
            <person name="Garcia-Cantalejo J.M."/>
            <person name="Goffeau A."/>
            <person name="Gomez-Peris A."/>
            <person name="Granotier C."/>
            <person name="Hanemann V."/>
            <person name="Hankeln T."/>
            <person name="Hoheisel J.D."/>
            <person name="Jaeger W."/>
            <person name="Jimenez A."/>
            <person name="Jonniaux J.-L."/>
            <person name="Kraemer C."/>
            <person name="Kuester H."/>
            <person name="Laamanen P."/>
            <person name="Legros Y."/>
            <person name="Louis E.J."/>
            <person name="Moeller-Rieker S."/>
            <person name="Monnet A."/>
            <person name="Moro M."/>
            <person name="Mueller-Auer S."/>
            <person name="Nussbaumer B."/>
            <person name="Paricio N."/>
            <person name="Paulin L."/>
            <person name="Perea J."/>
            <person name="Perez-Alonso M."/>
            <person name="Perez-Ortin J.E."/>
            <person name="Pohl T.M."/>
            <person name="Prydz H."/>
            <person name="Purnelle B."/>
            <person name="Rasmussen S.W."/>
            <person name="Remacha M.A."/>
            <person name="Revuelta J.L."/>
            <person name="Rieger M."/>
            <person name="Salom D."/>
            <person name="Saluz H.P."/>
            <person name="Saiz J.E."/>
            <person name="Saren A.-M."/>
            <person name="Schaefer M."/>
            <person name="Scharfe M."/>
            <person name="Schmidt E.R."/>
            <person name="Schneider C."/>
            <person name="Scholler P."/>
            <person name="Schwarz S."/>
            <person name="Soler-Mira A."/>
            <person name="Urrestarazu L.A."/>
            <person name="Verhasselt P."/>
            <person name="Vissers S."/>
            <person name="Voet M."/>
            <person name="Volckaert G."/>
            <person name="Wagner G."/>
            <person name="Wambutt R."/>
            <person name="Wedler E."/>
            <person name="Wedler H."/>
            <person name="Woelfl S."/>
            <person name="Harris D.E."/>
            <person name="Bowman S."/>
            <person name="Brown D."/>
            <person name="Churcher C.M."/>
            <person name="Connor R."/>
            <person name="Dedman K."/>
            <person name="Gentles S."/>
            <person name="Hamlin N."/>
            <person name="Hunt S."/>
            <person name="Jones L."/>
            <person name="McDonald S."/>
            <person name="Murphy L.D."/>
            <person name="Niblett D."/>
            <person name="Odell C."/>
            <person name="Oliver K."/>
            <person name="Rajandream M.A."/>
            <person name="Richards C."/>
            <person name="Shore L."/>
            <person name="Walsh S.V."/>
            <person name="Barrell B.G."/>
            <person name="Dietrich F.S."/>
            <person name="Mulligan J.T."/>
            <person name="Allen E."/>
            <person name="Araujo R."/>
            <person name="Aviles E."/>
            <person name="Berno A."/>
            <person name="Carpenter J."/>
            <person name="Chen E."/>
            <person name="Cherry J.M."/>
            <person name="Chung E."/>
            <person name="Duncan M."/>
            <person name="Hunicke-Smith S."/>
            <person name="Hyman R.W."/>
            <person name="Komp C."/>
            <person name="Lashkari D."/>
            <person name="Lew H."/>
            <person name="Lin D."/>
            <person name="Mosedale D."/>
            <person name="Nakahara K."/>
            <person name="Namath A."/>
            <person name="Oefner P."/>
            <person name="Oh C."/>
            <person name="Petel F.X."/>
            <person name="Roberts D."/>
            <person name="Schramm S."/>
            <person name="Schroeder M."/>
            <person name="Shogren T."/>
            <person name="Shroff N."/>
            <person name="Winant A."/>
            <person name="Yelton M.A."/>
            <person name="Botstein D."/>
            <person name="Davis R.W."/>
            <person name="Johnston M."/>
            <person name="Andrews S."/>
            <person name="Brinkman R."/>
            <person name="Cooper J."/>
            <person name="Ding H."/>
            <person name="Du Z."/>
            <person name="Favello A."/>
            <person name="Fulton L."/>
            <person name="Gattung S."/>
            <person name="Greco T."/>
            <person name="Hallsworth K."/>
            <person name="Hawkins J."/>
            <person name="Hillier L.W."/>
            <person name="Jier M."/>
            <person name="Johnson D."/>
            <person name="Johnston L."/>
            <person name="Kirsten J."/>
            <person name="Kucaba T."/>
            <person name="Langston Y."/>
            <person name="Latreille P."/>
            <person name="Le T."/>
            <person name="Mardis E."/>
            <person name="Menezes S."/>
            <person name="Miller N."/>
            <person name="Nhan M."/>
            <person name="Pauley A."/>
            <person name="Peluso D."/>
            <person name="Rifkin L."/>
            <person name="Riles L."/>
            <person name="Taich A."/>
            <person name="Trevaskis E."/>
            <person name="Vignati D."/>
            <person name="Wilcox L."/>
            <person name="Wohldman P."/>
            <person name="Vaudin M."/>
            <person name="Wilson R."/>
            <person name="Waterston R."/>
            <person name="Albermann K."/>
            <person name="Hani J."/>
            <person name="Heumann K."/>
            <person name="Kleine K."/>
            <person name="Mewes H.-W."/>
            <person name="Zollner A."/>
            <person name="Zaccaria P."/>
        </authorList>
    </citation>
    <scope>NUCLEOTIDE SEQUENCE [LARGE SCALE GENOMIC DNA]</scope>
    <source>
        <strain>ATCC 204508 / S288c</strain>
    </source>
</reference>
<reference key="2">
    <citation type="journal article" date="2014" name="G3 (Bethesda)">
        <title>The reference genome sequence of Saccharomyces cerevisiae: Then and now.</title>
        <authorList>
            <person name="Engel S.R."/>
            <person name="Dietrich F.S."/>
            <person name="Fisk D.G."/>
            <person name="Binkley G."/>
            <person name="Balakrishnan R."/>
            <person name="Costanzo M.C."/>
            <person name="Dwight S.S."/>
            <person name="Hitz B.C."/>
            <person name="Karra K."/>
            <person name="Nash R.S."/>
            <person name="Weng S."/>
            <person name="Wong E.D."/>
            <person name="Lloyd P."/>
            <person name="Skrzypek M.S."/>
            <person name="Miyasato S.R."/>
            <person name="Simison M."/>
            <person name="Cherry J.M."/>
        </authorList>
    </citation>
    <scope>GENOME REANNOTATION</scope>
    <source>
        <strain>ATCC 204508 / S288c</strain>
    </source>
</reference>
<feature type="chain" id="PRO_0000299888" description="Putative uncharacterized protein YDR396W">
    <location>
        <begin position="1"/>
        <end position="166"/>
    </location>
</feature>
<feature type="transmembrane region" description="Helical" evidence="1">
    <location>
        <begin position="4"/>
        <end position="24"/>
    </location>
</feature>
<feature type="transmembrane region" description="Helical" evidence="1">
    <location>
        <begin position="101"/>
        <end position="121"/>
    </location>
</feature>
<feature type="transmembrane region" description="Helical" evidence="1">
    <location>
        <begin position="146"/>
        <end position="166"/>
    </location>
</feature>
<protein>
    <recommendedName>
        <fullName>Putative uncharacterized protein YDR396W</fullName>
    </recommendedName>
</protein>
<sequence length="166" mass="18197">MHALNIFPCGLFSYIALLCLEASIQEESSDLTGSDTLLWCNLDLDCLNNSSCCRSSSSSERPDFLNLESLVSFTFWEPLKFNNISSKNGINSLYSNSSSALITCSGAMVFLASLSAISEAIEDRIIMNSMPELMMISLASLVNIKSWSSISDIIFCTVAKIIQCFL</sequence>
<evidence type="ECO:0000255" key="1"/>
<evidence type="ECO:0000305" key="2"/>
<evidence type="ECO:0000305" key="3">
    <source>
    </source>
</evidence>